<name>TNAA_PASMU</name>
<protein>
    <recommendedName>
        <fullName>Tryptophanase</fullName>
        <ecNumber>4.1.99.1</ecNumber>
    </recommendedName>
    <alternativeName>
        <fullName>L-tryptophan indole-lyase</fullName>
        <shortName>TNase</shortName>
    </alternativeName>
</protein>
<reference key="1">
    <citation type="journal article" date="2001" name="Proc. Natl. Acad. Sci. U.S.A.">
        <title>Complete genomic sequence of Pasteurella multocida Pm70.</title>
        <authorList>
            <person name="May B.J."/>
            <person name="Zhang Q."/>
            <person name="Li L.L."/>
            <person name="Paustian M.L."/>
            <person name="Whittam T.S."/>
            <person name="Kapur V."/>
        </authorList>
    </citation>
    <scope>NUCLEOTIDE SEQUENCE [LARGE SCALE GENOMIC DNA]</scope>
    <source>
        <strain>Pm70</strain>
    </source>
</reference>
<comment type="catalytic activity">
    <reaction>
        <text>L-tryptophan + H2O = indole + pyruvate + NH4(+)</text>
        <dbReference type="Rhea" id="RHEA:19553"/>
        <dbReference type="ChEBI" id="CHEBI:15361"/>
        <dbReference type="ChEBI" id="CHEBI:15377"/>
        <dbReference type="ChEBI" id="CHEBI:16881"/>
        <dbReference type="ChEBI" id="CHEBI:28938"/>
        <dbReference type="ChEBI" id="CHEBI:57912"/>
        <dbReference type="EC" id="4.1.99.1"/>
    </reaction>
</comment>
<comment type="cofactor">
    <cofactor evidence="1">
        <name>pyridoxal 5'-phosphate</name>
        <dbReference type="ChEBI" id="CHEBI:597326"/>
    </cofactor>
</comment>
<comment type="pathway">
    <text>Amino-acid degradation; L-tryptophan degradation via pyruvate pathway; indole and pyruvate from L-tryptophan: step 1/1.</text>
</comment>
<comment type="subunit">
    <text evidence="1">Homotetramer.</text>
</comment>
<comment type="similarity">
    <text evidence="2">Belongs to the beta-eliminating lyase family.</text>
</comment>
<keyword id="KW-0456">Lyase</keyword>
<keyword id="KW-0663">Pyridoxal phosphate</keyword>
<keyword id="KW-1185">Reference proteome</keyword>
<keyword id="KW-0823">Tryptophan catabolism</keyword>
<feature type="chain" id="PRO_0000195616" description="Tryptophanase">
    <location>
        <begin position="1"/>
        <end position="471"/>
    </location>
</feature>
<feature type="modified residue" description="N6-(pyridoxal phosphate)lysine" evidence="1">
    <location>
        <position position="270"/>
    </location>
</feature>
<evidence type="ECO:0000250" key="1"/>
<evidence type="ECO:0000305" key="2"/>
<sequence>MENFKHLPEPFRIRVIEPVRRTTRSYREEAILKAGMNPFLLDSEDVFIDLLTDSGTGAVTQEMQAAMLRGDEAYSGSRSYHALANAVKEIFGYEYTIPTHQGRGAEQIYIPVLIKKREQEKGLDRSKMVVFSNYFFDTTQGHSQINGATVRNVYTKEAFDTSVNADFKGDFDLEKLEQGIQEVGAENVPYIVCTITCNSAGGQPVSLANMRAMYEIAKKYDIPVVMDSARFAENAYFIQQREPGYKEWTIEQITYESYKYADALAMSAKKDAMVPMGGLLCFKDKSMEDVYNECRTLCVVQEGFPTYGGLEGGAMERLAVGLRDGMRQDWLAYRINQIEYLVNGLEAIGVVCQQPGGHAAFVDAGKLLPHIPADQFPAQALACELYKVAGIRAVEIGSFLLGRDPKTGKQLPCPAELLRLTIPRATYTQTHMDFIIEAFKQVKENAENIKGLTFTYEPKVLRHFTARLKEV</sequence>
<gene>
    <name type="primary">tnaA</name>
    <name type="ordered locus">PM1420</name>
</gene>
<organism>
    <name type="scientific">Pasteurella multocida (strain Pm70)</name>
    <dbReference type="NCBI Taxonomy" id="272843"/>
    <lineage>
        <taxon>Bacteria</taxon>
        <taxon>Pseudomonadati</taxon>
        <taxon>Pseudomonadota</taxon>
        <taxon>Gammaproteobacteria</taxon>
        <taxon>Pasteurellales</taxon>
        <taxon>Pasteurellaceae</taxon>
        <taxon>Pasteurella</taxon>
    </lineage>
</organism>
<dbReference type="EC" id="4.1.99.1"/>
<dbReference type="EMBL" id="AE004439">
    <property type="protein sequence ID" value="AAK03504.1"/>
    <property type="molecule type" value="Genomic_DNA"/>
</dbReference>
<dbReference type="RefSeq" id="WP_005754976.1">
    <property type="nucleotide sequence ID" value="NC_002663.1"/>
</dbReference>
<dbReference type="SMR" id="Q9CL27"/>
<dbReference type="STRING" id="272843.PM1420"/>
<dbReference type="EnsemblBacteria" id="AAK03504">
    <property type="protein sequence ID" value="AAK03504"/>
    <property type="gene ID" value="PM1420"/>
</dbReference>
<dbReference type="GeneID" id="77207021"/>
<dbReference type="KEGG" id="pmu:PM1420"/>
<dbReference type="HOGENOM" id="CLU_047223_0_0_6"/>
<dbReference type="OrthoDB" id="9764079at2"/>
<dbReference type="UniPathway" id="UPA00332">
    <property type="reaction ID" value="UER00452"/>
</dbReference>
<dbReference type="Proteomes" id="UP000000809">
    <property type="component" value="Chromosome"/>
</dbReference>
<dbReference type="GO" id="GO:0009034">
    <property type="term" value="F:tryptophanase activity"/>
    <property type="evidence" value="ECO:0007669"/>
    <property type="project" value="UniProtKB-UniRule"/>
</dbReference>
<dbReference type="FunFam" id="3.40.640.10:FF:000039">
    <property type="entry name" value="Tryptophanase"/>
    <property type="match status" value="1"/>
</dbReference>
<dbReference type="Gene3D" id="3.90.1150.10">
    <property type="entry name" value="Aspartate Aminotransferase, domain 1"/>
    <property type="match status" value="1"/>
</dbReference>
<dbReference type="Gene3D" id="3.40.640.10">
    <property type="entry name" value="Type I PLP-dependent aspartate aminotransferase-like (Major domain)"/>
    <property type="match status" value="1"/>
</dbReference>
<dbReference type="HAMAP" id="MF_00544">
    <property type="entry name" value="Tryptophanase"/>
    <property type="match status" value="1"/>
</dbReference>
<dbReference type="InterPro" id="IPR001597">
    <property type="entry name" value="ArAA_b-elim_lyase/Thr_aldolase"/>
</dbReference>
<dbReference type="InterPro" id="IPR011166">
    <property type="entry name" value="Beta-eliminating_lyase"/>
</dbReference>
<dbReference type="InterPro" id="IPR015424">
    <property type="entry name" value="PyrdxlP-dep_Trfase"/>
</dbReference>
<dbReference type="InterPro" id="IPR015421">
    <property type="entry name" value="PyrdxlP-dep_Trfase_major"/>
</dbReference>
<dbReference type="InterPro" id="IPR015422">
    <property type="entry name" value="PyrdxlP-dep_Trfase_small"/>
</dbReference>
<dbReference type="InterPro" id="IPR013440">
    <property type="entry name" value="TNase"/>
</dbReference>
<dbReference type="InterPro" id="IPR018176">
    <property type="entry name" value="Tryptophanase_CS"/>
</dbReference>
<dbReference type="NCBIfam" id="NF009709">
    <property type="entry name" value="PRK13238.1"/>
    <property type="match status" value="1"/>
</dbReference>
<dbReference type="NCBIfam" id="TIGR02617">
    <property type="entry name" value="tnaA_trp_ase"/>
    <property type="match status" value="1"/>
</dbReference>
<dbReference type="PANTHER" id="PTHR32325">
    <property type="entry name" value="BETA-ELIMINATING LYASE-LIKE PROTEIN-RELATED"/>
    <property type="match status" value="1"/>
</dbReference>
<dbReference type="PANTHER" id="PTHR32325:SF4">
    <property type="entry name" value="TRYPTOPHANASE"/>
    <property type="match status" value="1"/>
</dbReference>
<dbReference type="Pfam" id="PF01212">
    <property type="entry name" value="Beta_elim_lyase"/>
    <property type="match status" value="1"/>
</dbReference>
<dbReference type="PIRSF" id="PIRSF001386">
    <property type="entry name" value="Trpase"/>
    <property type="match status" value="1"/>
</dbReference>
<dbReference type="SUPFAM" id="SSF53383">
    <property type="entry name" value="PLP-dependent transferases"/>
    <property type="match status" value="1"/>
</dbReference>
<dbReference type="PROSITE" id="PS00853">
    <property type="entry name" value="BETA_ELIM_LYASE"/>
    <property type="match status" value="1"/>
</dbReference>
<accession>Q9CL27</accession>
<proteinExistence type="inferred from homology"/>